<reference key="1">
    <citation type="journal article" date="1995" name="Plant Mol. Biol. Rep.">
        <title>Complete nucleotide sequence of the Porphyra purpurea chloroplast genome.</title>
        <authorList>
            <person name="Reith M.E."/>
            <person name="Munholland J."/>
        </authorList>
    </citation>
    <scope>NUCLEOTIDE SEQUENCE [LARGE SCALE GENOMIC DNA]</scope>
    <source>
        <strain>Avonport</strain>
    </source>
</reference>
<keyword id="KW-0150">Chloroplast</keyword>
<keyword id="KW-0934">Plastid</keyword>
<feature type="chain" id="PRO_0000217318" description="Uncharacterized protein ycf18">
    <location>
        <begin position="1"/>
        <end position="58"/>
    </location>
</feature>
<protein>
    <recommendedName>
        <fullName>Uncharacterized protein ycf18</fullName>
    </recommendedName>
</protein>
<evidence type="ECO:0000305" key="1"/>
<dbReference type="EMBL" id="U38804">
    <property type="protein sequence ID" value="AAC08252.1"/>
    <property type="molecule type" value="Genomic_DNA"/>
</dbReference>
<dbReference type="PIR" id="S73287">
    <property type="entry name" value="S73287"/>
</dbReference>
<dbReference type="RefSeq" id="NP_053976.1">
    <property type="nucleotide sequence ID" value="NC_000925.1"/>
</dbReference>
<dbReference type="SMR" id="P51366"/>
<dbReference type="GeneID" id="810006"/>
<dbReference type="GO" id="GO:0009507">
    <property type="term" value="C:chloroplast"/>
    <property type="evidence" value="ECO:0007669"/>
    <property type="project" value="UniProtKB-SubCell"/>
</dbReference>
<dbReference type="Gene3D" id="1.10.287.670">
    <property type="entry name" value="Phycobilisome degradation protein NblA"/>
    <property type="match status" value="1"/>
</dbReference>
<dbReference type="InterPro" id="IPR007574">
    <property type="entry name" value="NblA"/>
</dbReference>
<dbReference type="InterPro" id="IPR036904">
    <property type="entry name" value="NblA_sf"/>
</dbReference>
<dbReference type="Pfam" id="PF04485">
    <property type="entry name" value="NblA"/>
    <property type="match status" value="1"/>
</dbReference>
<dbReference type="SUPFAM" id="SSF109859">
    <property type="entry name" value="NblA-like"/>
    <property type="match status" value="1"/>
</dbReference>
<accession>P51366</accession>
<sequence length="58" mass="6923">MDISNQLTLEQEFELVLYKQKIDPLNLEQAQNLLVETLKTMMLKDNIIKYVVKNSHFR</sequence>
<gene>
    <name type="primary">ycf18</name>
</gene>
<geneLocation type="chloroplast"/>
<name>YCF18_PORPU</name>
<comment type="subcellular location">
    <subcellularLocation>
        <location>Plastid</location>
        <location>Chloroplast</location>
    </subcellularLocation>
</comment>
<comment type="similarity">
    <text evidence="1">Belongs to the ycf18/nblA family.</text>
</comment>
<proteinExistence type="inferred from homology"/>
<organism>
    <name type="scientific">Porphyra purpurea</name>
    <name type="common">Red seaweed</name>
    <name type="synonym">Ulva purpurea</name>
    <dbReference type="NCBI Taxonomy" id="2787"/>
    <lineage>
        <taxon>Eukaryota</taxon>
        <taxon>Rhodophyta</taxon>
        <taxon>Bangiophyceae</taxon>
        <taxon>Bangiales</taxon>
        <taxon>Bangiaceae</taxon>
        <taxon>Porphyra</taxon>
    </lineage>
</organism>